<keyword id="KW-0067">ATP-binding</keyword>
<keyword id="KW-0436">Ligase</keyword>
<keyword id="KW-0547">Nucleotide-binding</keyword>
<keyword id="KW-0658">Purine biosynthesis</keyword>
<name>PUR7_CHLP8</name>
<reference key="1">
    <citation type="submission" date="2008-06" db="EMBL/GenBank/DDBJ databases">
        <title>Complete sequence of Chlorobaculum parvum NCIB 8327.</title>
        <authorList>
            <consortium name="US DOE Joint Genome Institute"/>
            <person name="Lucas S."/>
            <person name="Copeland A."/>
            <person name="Lapidus A."/>
            <person name="Glavina del Rio T."/>
            <person name="Dalin E."/>
            <person name="Tice H."/>
            <person name="Bruce D."/>
            <person name="Goodwin L."/>
            <person name="Pitluck S."/>
            <person name="Schmutz J."/>
            <person name="Larimer F."/>
            <person name="Land M."/>
            <person name="Hauser L."/>
            <person name="Kyrpides N."/>
            <person name="Mikhailova N."/>
            <person name="Zhao F."/>
            <person name="Li T."/>
            <person name="Liu Z."/>
            <person name="Overmann J."/>
            <person name="Bryant D.A."/>
            <person name="Richardson P."/>
        </authorList>
    </citation>
    <scope>NUCLEOTIDE SEQUENCE [LARGE SCALE GENOMIC DNA]</scope>
    <source>
        <strain>DSM 263 / NCIMB 8327</strain>
    </source>
</reference>
<accession>B3QP02</accession>
<dbReference type="EC" id="6.3.2.6" evidence="1"/>
<dbReference type="EMBL" id="CP001099">
    <property type="protein sequence ID" value="ACF11655.1"/>
    <property type="molecule type" value="Genomic_DNA"/>
</dbReference>
<dbReference type="RefSeq" id="WP_012502488.1">
    <property type="nucleotide sequence ID" value="NC_011027.1"/>
</dbReference>
<dbReference type="SMR" id="B3QP02"/>
<dbReference type="STRING" id="517417.Cpar_1251"/>
<dbReference type="KEGG" id="cpc:Cpar_1251"/>
<dbReference type="eggNOG" id="COG0152">
    <property type="taxonomic scope" value="Bacteria"/>
</dbReference>
<dbReference type="HOGENOM" id="CLU_061495_2_0_10"/>
<dbReference type="OrthoDB" id="9801549at2"/>
<dbReference type="UniPathway" id="UPA00074">
    <property type="reaction ID" value="UER00131"/>
</dbReference>
<dbReference type="Proteomes" id="UP000008811">
    <property type="component" value="Chromosome"/>
</dbReference>
<dbReference type="GO" id="GO:0005524">
    <property type="term" value="F:ATP binding"/>
    <property type="evidence" value="ECO:0007669"/>
    <property type="project" value="UniProtKB-KW"/>
</dbReference>
<dbReference type="GO" id="GO:0004639">
    <property type="term" value="F:phosphoribosylaminoimidazolesuccinocarboxamide synthase activity"/>
    <property type="evidence" value="ECO:0007669"/>
    <property type="project" value="UniProtKB-UniRule"/>
</dbReference>
<dbReference type="GO" id="GO:0006189">
    <property type="term" value="P:'de novo' IMP biosynthetic process"/>
    <property type="evidence" value="ECO:0007669"/>
    <property type="project" value="UniProtKB-UniRule"/>
</dbReference>
<dbReference type="GO" id="GO:0009236">
    <property type="term" value="P:cobalamin biosynthetic process"/>
    <property type="evidence" value="ECO:0007669"/>
    <property type="project" value="InterPro"/>
</dbReference>
<dbReference type="CDD" id="cd01415">
    <property type="entry name" value="SAICAR_synt_PurC"/>
    <property type="match status" value="1"/>
</dbReference>
<dbReference type="FunFam" id="3.30.470.20:FF:000006">
    <property type="entry name" value="Phosphoribosylaminoimidazole-succinocarboxamide synthase"/>
    <property type="match status" value="1"/>
</dbReference>
<dbReference type="Gene3D" id="3.30.470.20">
    <property type="entry name" value="ATP-grasp fold, B domain"/>
    <property type="match status" value="1"/>
</dbReference>
<dbReference type="Gene3D" id="3.30.200.20">
    <property type="entry name" value="Phosphorylase Kinase, domain 1"/>
    <property type="match status" value="1"/>
</dbReference>
<dbReference type="HAMAP" id="MF_00137">
    <property type="entry name" value="SAICAR_synth"/>
    <property type="match status" value="1"/>
</dbReference>
<dbReference type="InterPro" id="IPR028923">
    <property type="entry name" value="SAICAR_synt/ADE2_N"/>
</dbReference>
<dbReference type="InterPro" id="IPR033934">
    <property type="entry name" value="SAICAR_synt_PurC"/>
</dbReference>
<dbReference type="InterPro" id="IPR001636">
    <property type="entry name" value="SAICAR_synth"/>
</dbReference>
<dbReference type="InterPro" id="IPR050089">
    <property type="entry name" value="SAICAR_synthetase"/>
</dbReference>
<dbReference type="InterPro" id="IPR018236">
    <property type="entry name" value="SAICAR_synthetase_CS"/>
</dbReference>
<dbReference type="NCBIfam" id="TIGR00081">
    <property type="entry name" value="purC"/>
    <property type="match status" value="1"/>
</dbReference>
<dbReference type="PANTHER" id="PTHR43599">
    <property type="entry name" value="MULTIFUNCTIONAL PROTEIN ADE2"/>
    <property type="match status" value="1"/>
</dbReference>
<dbReference type="PANTHER" id="PTHR43599:SF3">
    <property type="entry name" value="SI:DKEY-6E2.2"/>
    <property type="match status" value="1"/>
</dbReference>
<dbReference type="Pfam" id="PF01259">
    <property type="entry name" value="SAICAR_synt"/>
    <property type="match status" value="1"/>
</dbReference>
<dbReference type="SUPFAM" id="SSF56104">
    <property type="entry name" value="SAICAR synthase-like"/>
    <property type="match status" value="1"/>
</dbReference>
<dbReference type="PROSITE" id="PS01057">
    <property type="entry name" value="SAICAR_SYNTHETASE_1"/>
    <property type="match status" value="1"/>
</dbReference>
<dbReference type="PROSITE" id="PS01058">
    <property type="entry name" value="SAICAR_SYNTHETASE_2"/>
    <property type="match status" value="1"/>
</dbReference>
<feature type="chain" id="PRO_1000095970" description="Phosphoribosylaminoimidazole-succinocarboxamide synthase">
    <location>
        <begin position="1"/>
        <end position="235"/>
    </location>
</feature>
<evidence type="ECO:0000255" key="1">
    <source>
        <dbReference type="HAMAP-Rule" id="MF_00137"/>
    </source>
</evidence>
<protein>
    <recommendedName>
        <fullName evidence="1">Phosphoribosylaminoimidazole-succinocarboxamide synthase</fullName>
        <ecNumber evidence="1">6.3.2.6</ecNumber>
    </recommendedName>
    <alternativeName>
        <fullName evidence="1">SAICAR synthetase</fullName>
    </alternativeName>
</protein>
<sequence length="235" mass="26638">MNKLTLLHEGKAKKVWQTDDPDLIIQEFKDDATAFNNKKKGSIADKGVTNNAIASRLFTMLGENGIPTHFVSKLNDRDMLCKKLDILLIEVVTRNVAAGSLVRRYGFAEGTVLEKPIVELYLKNDDLDDPLMNEDHAVALGLGTYEEVAQLKDMAEKINSLLVPWFAERKLRLVDFKLEFGRHKGEILLGDEISPDTCRFWDAESGEKLDKDRFRLDLGGVEDAYSEVKRRVLEQ</sequence>
<gene>
    <name evidence="1" type="primary">purC</name>
    <name type="ordered locus">Cpar_1251</name>
</gene>
<organism>
    <name type="scientific">Chlorobaculum parvum (strain DSM 263 / NCIMB 8327)</name>
    <name type="common">Chlorobium vibrioforme subsp. thiosulfatophilum</name>
    <dbReference type="NCBI Taxonomy" id="517417"/>
    <lineage>
        <taxon>Bacteria</taxon>
        <taxon>Pseudomonadati</taxon>
        <taxon>Chlorobiota</taxon>
        <taxon>Chlorobiia</taxon>
        <taxon>Chlorobiales</taxon>
        <taxon>Chlorobiaceae</taxon>
        <taxon>Chlorobaculum</taxon>
    </lineage>
</organism>
<proteinExistence type="inferred from homology"/>
<comment type="catalytic activity">
    <reaction evidence="1">
        <text>5-amino-1-(5-phospho-D-ribosyl)imidazole-4-carboxylate + L-aspartate + ATP = (2S)-2-[5-amino-1-(5-phospho-beta-D-ribosyl)imidazole-4-carboxamido]succinate + ADP + phosphate + 2 H(+)</text>
        <dbReference type="Rhea" id="RHEA:22628"/>
        <dbReference type="ChEBI" id="CHEBI:15378"/>
        <dbReference type="ChEBI" id="CHEBI:29991"/>
        <dbReference type="ChEBI" id="CHEBI:30616"/>
        <dbReference type="ChEBI" id="CHEBI:43474"/>
        <dbReference type="ChEBI" id="CHEBI:58443"/>
        <dbReference type="ChEBI" id="CHEBI:77657"/>
        <dbReference type="ChEBI" id="CHEBI:456216"/>
        <dbReference type="EC" id="6.3.2.6"/>
    </reaction>
</comment>
<comment type="pathway">
    <text evidence="1">Purine metabolism; IMP biosynthesis via de novo pathway; 5-amino-1-(5-phospho-D-ribosyl)imidazole-4-carboxamide from 5-amino-1-(5-phospho-D-ribosyl)imidazole-4-carboxylate: step 1/2.</text>
</comment>
<comment type="similarity">
    <text evidence="1">Belongs to the SAICAR synthetase family.</text>
</comment>